<proteinExistence type="evidence at protein level"/>
<name>RAB12_HUMAN</name>
<organism>
    <name type="scientific">Homo sapiens</name>
    <name type="common">Human</name>
    <dbReference type="NCBI Taxonomy" id="9606"/>
    <lineage>
        <taxon>Eukaryota</taxon>
        <taxon>Metazoa</taxon>
        <taxon>Chordata</taxon>
        <taxon>Craniata</taxon>
        <taxon>Vertebrata</taxon>
        <taxon>Euteleostomi</taxon>
        <taxon>Mammalia</taxon>
        <taxon>Eutheria</taxon>
        <taxon>Euarchontoglires</taxon>
        <taxon>Primates</taxon>
        <taxon>Haplorrhini</taxon>
        <taxon>Catarrhini</taxon>
        <taxon>Hominidae</taxon>
        <taxon>Homo</taxon>
    </lineage>
</organism>
<comment type="function">
    <text evidence="2 4">The small GTPases Rab are key regulators of intracellular membrane trafficking, from the formation of transport vesicles to their fusion with membranes. Rabs cycle between an inactive GDP-bound form and an active GTP-bound form that is able to recruit to membranes different sets of downstream effectors directly responsible for vesicle formation, movement, tethering and fusion (By similarity). RAB12 may play a role in protein transport from recycling endosomes to lysosomes regulating, for instance, the degradation of the transferrin receptor. Involved in autophagy (By similarity).</text>
</comment>
<comment type="catalytic activity">
    <reaction evidence="4">
        <text>GTP + H2O = GDP + phosphate + H(+)</text>
        <dbReference type="Rhea" id="RHEA:19669"/>
        <dbReference type="ChEBI" id="CHEBI:15377"/>
        <dbReference type="ChEBI" id="CHEBI:15378"/>
        <dbReference type="ChEBI" id="CHEBI:37565"/>
        <dbReference type="ChEBI" id="CHEBI:43474"/>
        <dbReference type="ChEBI" id="CHEBI:58189"/>
        <dbReference type="EC" id="3.6.5.2"/>
    </reaction>
    <physiologicalReaction direction="left-to-right" evidence="4">
        <dbReference type="Rhea" id="RHEA:19670"/>
    </physiologicalReaction>
</comment>
<comment type="cofactor">
    <cofactor evidence="11">
        <name>Mg(2+)</name>
        <dbReference type="ChEBI" id="CHEBI:18420"/>
    </cofactor>
</comment>
<comment type="activity regulation">
    <text evidence="7 12">Regulated by guanine nucleotide exchange factors (GEFs) including DENND3 which promote the exchange of bound GDP for free GTP (PubMed:20937701). Regulated by GTPase activating proteins (GAPs) which increase the GTP hydrolysis activity. Inhibited by GDP dissociation inhibitors (GDIs) (Probable).</text>
</comment>
<comment type="subunit">
    <text evidence="2 8 9 10">Interacts with RABIF (PubMed:21194374). Interacts with OPTN (By similarity). Interacts with LRRK2; interaction facilitates phosphorylation of Ser-106 (PubMed:26824392). Interacts with GDI1, GDI2, CHM and CHML; these interactions are disrupted by phosphorylation on Ser-106 (PubMed:26824392, PubMed:29125462). Interacts with RILPL1 and RILPL2; these interactions are dependent on phosphorylation of Ser-106 (PubMed:26824392, PubMed:29125462).</text>
</comment>
<comment type="interaction">
    <interactant intactId="EBI-4289591">
        <id>Q6IQ22</id>
    </interactant>
    <interactant intactId="EBI-5323863">
        <id>Q5S007</id>
        <label>LRRK2</label>
    </interactant>
    <organismsDiffer>false</organismsDiffer>
    <experiments>2</experiments>
</comment>
<comment type="subcellular location">
    <subcellularLocation>
        <location evidence="2">Recycling endosome membrane</location>
        <topology evidence="12">Lipid-anchor</topology>
        <orientation evidence="12">Cytoplasmic side</orientation>
    </subcellularLocation>
    <subcellularLocation>
        <location evidence="2">Lysosome membrane</location>
        <topology evidence="12">Lipid-anchor</topology>
        <orientation evidence="12">Cytoplasmic side</orientation>
    </subcellularLocation>
    <subcellularLocation>
        <location evidence="3">Golgi apparatus membrane</location>
    </subcellularLocation>
    <subcellularLocation>
        <location evidence="2">Cytoplasmic vesicle</location>
        <location evidence="2">Autophagosome</location>
    </subcellularLocation>
</comment>
<comment type="domain">
    <text evidence="5">Switch 1, switch 2 and the interswitch regions are characteristic of Rab GTPases and mediate the interactions with Rab downstream effectors. The switch regions undergo conformational changes upon nucleotide binding which drives interaction with specific sets of effector proteins, with most effectors only binding to GTP-bound Rab.</text>
</comment>
<comment type="PTM">
    <text evidence="9 10">Phosphorylation of Ser-106 in the switch II region by LRRK2 prevents the association of RAB regulatory proteins, including CHM, CHML and RAB GDP dissociation inhibitors GDI1 and GDI2.</text>
</comment>
<comment type="similarity">
    <text evidence="12">Belongs to the small GTPase superfamily. Rab family.</text>
</comment>
<comment type="sequence caution" evidence="12">
    <conflict type="miscellaneous discrepancy">
        <sequence resource="EMBL-CDS" id="AAH71600"/>
    </conflict>
    <text>Intron retention.</text>
</comment>
<comment type="sequence caution" evidence="12">
    <conflict type="miscellaneous discrepancy">
        <sequence resource="EMBL-CDS" id="AAH98407"/>
    </conflict>
    <text>Intron retention.</text>
</comment>
<comment type="sequence caution" evidence="12">
    <conflict type="frameshift">
        <sequence resource="EMBL" id="BC050338"/>
    </conflict>
</comment>
<gene>
    <name evidence="13" type="primary">RAB12</name>
</gene>
<accession>Q6IQ22</accession>
<accession>A6NEF5</accession>
<accession>Q4KMQ3</accession>
<feature type="chain" id="PRO_0000271377" description="Ras-related protein Rab-12">
    <location>
        <begin position="1"/>
        <end position="244"/>
    </location>
</feature>
<feature type="region of interest" description="Disordered" evidence="6">
    <location>
        <begin position="1"/>
        <end position="37"/>
    </location>
</feature>
<feature type="region of interest" description="Disordered" evidence="6">
    <location>
        <begin position="225"/>
        <end position="244"/>
    </location>
</feature>
<feature type="short sequence motif" description="Switch 1" evidence="5">
    <location>
        <begin position="65"/>
        <end position="79"/>
    </location>
</feature>
<feature type="short sequence motif" description="Switch 2" evidence="5">
    <location>
        <begin position="97"/>
        <end position="114"/>
    </location>
</feature>
<feature type="compositionally biased region" description="Low complexity" evidence="6">
    <location>
        <begin position="1"/>
        <end position="10"/>
    </location>
</feature>
<feature type="compositionally biased region" description="Pro residues" evidence="6">
    <location>
        <begin position="228"/>
        <end position="238"/>
    </location>
</feature>
<feature type="binding site" evidence="11 14">
    <location>
        <position position="52"/>
    </location>
    <ligand>
        <name>GDP</name>
        <dbReference type="ChEBI" id="CHEBI:58189"/>
    </ligand>
</feature>
<feature type="binding site" evidence="4">
    <location>
        <position position="52"/>
    </location>
    <ligand>
        <name>GTP</name>
        <dbReference type="ChEBI" id="CHEBI:37565"/>
    </ligand>
</feature>
<feature type="binding site" evidence="4">
    <location>
        <position position="53"/>
    </location>
    <ligand>
        <name>GTP</name>
        <dbReference type="ChEBI" id="CHEBI:37565"/>
    </ligand>
</feature>
<feature type="binding site" evidence="11 14">
    <location>
        <position position="54"/>
    </location>
    <ligand>
        <name>GDP</name>
        <dbReference type="ChEBI" id="CHEBI:58189"/>
    </ligand>
</feature>
<feature type="binding site" evidence="4">
    <location>
        <position position="54"/>
    </location>
    <ligand>
        <name>GTP</name>
        <dbReference type="ChEBI" id="CHEBI:37565"/>
    </ligand>
</feature>
<feature type="binding site" evidence="11 14">
    <location>
        <position position="55"/>
    </location>
    <ligand>
        <name>GDP</name>
        <dbReference type="ChEBI" id="CHEBI:58189"/>
    </ligand>
</feature>
<feature type="binding site" evidence="4">
    <location>
        <position position="55"/>
    </location>
    <ligand>
        <name>GTP</name>
        <dbReference type="ChEBI" id="CHEBI:37565"/>
    </ligand>
</feature>
<feature type="binding site" evidence="11 14">
    <location>
        <position position="56"/>
    </location>
    <ligand>
        <name>GDP</name>
        <dbReference type="ChEBI" id="CHEBI:58189"/>
    </ligand>
</feature>
<feature type="binding site" evidence="4">
    <location>
        <position position="56"/>
    </location>
    <ligand>
        <name>GTP</name>
        <dbReference type="ChEBI" id="CHEBI:37565"/>
    </ligand>
</feature>
<feature type="binding site" evidence="11 14">
    <location>
        <position position="56"/>
    </location>
    <ligand>
        <name>Mg(2+)</name>
        <dbReference type="ChEBI" id="CHEBI:18420"/>
    </ligand>
</feature>
<feature type="binding site" evidence="11 14">
    <location>
        <position position="57"/>
    </location>
    <ligand>
        <name>GDP</name>
        <dbReference type="ChEBI" id="CHEBI:58189"/>
    </ligand>
</feature>
<feature type="binding site" evidence="4">
    <location>
        <position position="73"/>
    </location>
    <ligand>
        <name>GTP</name>
        <dbReference type="ChEBI" id="CHEBI:37565"/>
    </ligand>
</feature>
<feature type="binding site" evidence="4">
    <location>
        <position position="74"/>
    </location>
    <ligand>
        <name>GTP</name>
        <dbReference type="ChEBI" id="CHEBI:37565"/>
    </ligand>
</feature>
<feature type="binding site" evidence="4">
    <location>
        <position position="74"/>
    </location>
    <ligand>
        <name>Mg(2+)</name>
        <dbReference type="ChEBI" id="CHEBI:18420"/>
    </ligand>
</feature>
<feature type="binding site" evidence="4">
    <location>
        <position position="97"/>
    </location>
    <ligand>
        <name>Mg(2+)</name>
        <dbReference type="ChEBI" id="CHEBI:18420"/>
    </ligand>
</feature>
<feature type="binding site" evidence="4">
    <location>
        <position position="100"/>
    </location>
    <ligand>
        <name>GTP</name>
        <dbReference type="ChEBI" id="CHEBI:37565"/>
    </ligand>
</feature>
<feature type="binding site" evidence="11 14">
    <location>
        <position position="155"/>
    </location>
    <ligand>
        <name>GDP</name>
        <dbReference type="ChEBI" id="CHEBI:58189"/>
    </ligand>
</feature>
<feature type="binding site" evidence="4">
    <location>
        <position position="155"/>
    </location>
    <ligand>
        <name>GTP</name>
        <dbReference type="ChEBI" id="CHEBI:37565"/>
    </ligand>
</feature>
<feature type="binding site" evidence="11 14">
    <location>
        <position position="156"/>
    </location>
    <ligand>
        <name>GDP</name>
        <dbReference type="ChEBI" id="CHEBI:58189"/>
    </ligand>
</feature>
<feature type="binding site" evidence="4">
    <location>
        <position position="156"/>
    </location>
    <ligand>
        <name>GTP</name>
        <dbReference type="ChEBI" id="CHEBI:37565"/>
    </ligand>
</feature>
<feature type="binding site" evidence="11 14">
    <location>
        <position position="158"/>
    </location>
    <ligand>
        <name>GDP</name>
        <dbReference type="ChEBI" id="CHEBI:58189"/>
    </ligand>
</feature>
<feature type="binding site" evidence="4">
    <location>
        <position position="158"/>
    </location>
    <ligand>
        <name>GTP</name>
        <dbReference type="ChEBI" id="CHEBI:37565"/>
    </ligand>
</feature>
<feature type="binding site" evidence="11 14">
    <location>
        <position position="159"/>
    </location>
    <ligand>
        <name>GDP</name>
        <dbReference type="ChEBI" id="CHEBI:58189"/>
    </ligand>
</feature>
<feature type="binding site" evidence="4">
    <location>
        <position position="186"/>
    </location>
    <ligand>
        <name>GTP</name>
        <dbReference type="ChEBI" id="CHEBI:37565"/>
    </ligand>
</feature>
<feature type="binding site" evidence="11 14">
    <location>
        <position position="187"/>
    </location>
    <ligand>
        <name>GDP</name>
        <dbReference type="ChEBI" id="CHEBI:58189"/>
    </ligand>
</feature>
<feature type="binding site" evidence="4">
    <location>
        <position position="187"/>
    </location>
    <ligand>
        <name>GTP</name>
        <dbReference type="ChEBI" id="CHEBI:37565"/>
    </ligand>
</feature>
<feature type="binding site" evidence="11 14">
    <location>
        <position position="188"/>
    </location>
    <ligand>
        <name>GDP</name>
        <dbReference type="ChEBI" id="CHEBI:58189"/>
    </ligand>
</feature>
<feature type="binding site" evidence="4">
    <location>
        <position position="188"/>
    </location>
    <ligand>
        <name>GTP</name>
        <dbReference type="ChEBI" id="CHEBI:37565"/>
    </ligand>
</feature>
<feature type="modified residue" description="N-acetylmethionine" evidence="15 16">
    <location>
        <position position="1"/>
    </location>
</feature>
<feature type="modified residue" description="Phosphoserine" evidence="17">
    <location>
        <position position="21"/>
    </location>
</feature>
<feature type="modified residue" description="Phosphoserine" evidence="2">
    <location>
        <position position="25"/>
    </location>
</feature>
<feature type="modified residue" description="Phosphoserine; by LRRK2" evidence="9 10 17">
    <location>
        <position position="106"/>
    </location>
</feature>
<feature type="lipid moiety-binding region" description="S-geranylgeranyl cysteine" evidence="1">
    <location>
        <position position="243"/>
    </location>
</feature>
<feature type="lipid moiety-binding region" description="S-geranylgeranyl cysteine" evidence="1">
    <location>
        <position position="244"/>
    </location>
</feature>
<feature type="mutagenesis site" description="Loss of phosphorylation. No effect on GDI1 and GDI2 binding." evidence="9 10">
    <original>S</original>
    <variation>A</variation>
    <location>
        <position position="106"/>
    </location>
</feature>
<feature type="mutagenesis site" description="Phosphomimetic mutant. Loss of GDI1, GDI2, CHM and CHML binding." evidence="9 10">
    <original>S</original>
    <variation>E</variation>
    <location>
        <position position="106"/>
    </location>
</feature>
<feature type="strand" evidence="18">
    <location>
        <begin position="40"/>
        <end position="48"/>
    </location>
</feature>
<feature type="helix" evidence="18">
    <location>
        <begin position="55"/>
        <end position="62"/>
    </location>
</feature>
<feature type="strand" evidence="18">
    <location>
        <begin position="77"/>
        <end position="86"/>
    </location>
</feature>
<feature type="strand" evidence="18">
    <location>
        <begin position="89"/>
        <end position="98"/>
    </location>
</feature>
<feature type="helix" evidence="18">
    <location>
        <begin position="102"/>
        <end position="104"/>
    </location>
</feature>
<feature type="helix" evidence="18">
    <location>
        <begin position="105"/>
        <end position="114"/>
    </location>
</feature>
<feature type="strand" evidence="18">
    <location>
        <begin position="116"/>
        <end position="123"/>
    </location>
</feature>
<feature type="helix" evidence="18">
    <location>
        <begin position="127"/>
        <end position="131"/>
    </location>
</feature>
<feature type="helix" evidence="18">
    <location>
        <begin position="133"/>
        <end position="143"/>
    </location>
</feature>
<feature type="strand" evidence="18">
    <location>
        <begin position="149"/>
        <end position="155"/>
    </location>
</feature>
<feature type="helix" evidence="18">
    <location>
        <begin position="157"/>
        <end position="162"/>
    </location>
</feature>
<feature type="helix" evidence="18">
    <location>
        <begin position="167"/>
        <end position="175"/>
    </location>
</feature>
<feature type="strand" evidence="18">
    <location>
        <begin position="181"/>
        <end position="184"/>
    </location>
</feature>
<feature type="turn" evidence="18">
    <location>
        <begin position="187"/>
        <end position="190"/>
    </location>
</feature>
<feature type="helix" evidence="18">
    <location>
        <begin position="193"/>
        <end position="206"/>
    </location>
</feature>
<keyword id="KW-0002">3D-structure</keyword>
<keyword id="KW-0007">Acetylation</keyword>
<keyword id="KW-0072">Autophagy</keyword>
<keyword id="KW-0968">Cytoplasmic vesicle</keyword>
<keyword id="KW-0967">Endosome</keyword>
<keyword id="KW-0333">Golgi apparatus</keyword>
<keyword id="KW-0342">GTP-binding</keyword>
<keyword id="KW-0378">Hydrolase</keyword>
<keyword id="KW-0449">Lipoprotein</keyword>
<keyword id="KW-0458">Lysosome</keyword>
<keyword id="KW-0460">Magnesium</keyword>
<keyword id="KW-0472">Membrane</keyword>
<keyword id="KW-0479">Metal-binding</keyword>
<keyword id="KW-0547">Nucleotide-binding</keyword>
<keyword id="KW-0597">Phosphoprotein</keyword>
<keyword id="KW-0636">Prenylation</keyword>
<keyword id="KW-0653">Protein transport</keyword>
<keyword id="KW-1267">Proteomics identification</keyword>
<keyword id="KW-1185">Reference proteome</keyword>
<keyword id="KW-0813">Transport</keyword>
<sequence length="244" mass="27248">MDPGAALQRRAGGGGGLGAGSPALSGGQGRRRKQPPRPADFKLQVIIIGSRGVGKTSLMERFTDDTFCEACKSTVGVDFKIKTVELRGKKIRLQIWDTAGQERFNSITSAYYRSAKGIILVYDITKKETFDDLPKWMKMIDKYASEDAELLLVGNKLDCETDREITRQQGEKFAQQITGMRFCEASAKDNFNVDEIFLKLVDDILKKMPLDILRNELSNSILSLQPEPEIPPELPPPRPHVRCC</sequence>
<protein>
    <recommendedName>
        <fullName>Ras-related protein Rab-12</fullName>
        <ecNumber evidence="4">3.6.5.2</ecNumber>
    </recommendedName>
</protein>
<dbReference type="EC" id="3.6.5.2" evidence="4"/>
<dbReference type="EMBL" id="AP001793">
    <property type="status" value="NOT_ANNOTATED_CDS"/>
    <property type="molecule type" value="Genomic_DNA"/>
</dbReference>
<dbReference type="EMBL" id="CH471113">
    <property type="protein sequence ID" value="EAX01616.1"/>
    <property type="molecule type" value="Genomic_DNA"/>
</dbReference>
<dbReference type="EMBL" id="BC050338">
    <property type="status" value="NOT_ANNOTATED_CDS"/>
    <property type="molecule type" value="mRNA"/>
</dbReference>
<dbReference type="EMBL" id="BC071600">
    <property type="protein sequence ID" value="AAH71600.2"/>
    <property type="status" value="ALT_SEQ"/>
    <property type="molecule type" value="mRNA"/>
</dbReference>
<dbReference type="EMBL" id="BC098407">
    <property type="protein sequence ID" value="AAH98407.1"/>
    <property type="status" value="ALT_SEQ"/>
    <property type="molecule type" value="mRNA"/>
</dbReference>
<dbReference type="RefSeq" id="NP_001020471.2">
    <property type="nucleotide sequence ID" value="NM_001025300.2"/>
</dbReference>
<dbReference type="PDB" id="2IL1">
    <property type="method" value="X-ray"/>
    <property type="resolution" value="2.10 A"/>
    <property type="chains" value="A=36-208"/>
</dbReference>
<dbReference type="PDB" id="8VH4">
    <property type="method" value="EM"/>
    <property type="resolution" value="4.10 A"/>
    <property type="chains" value="B=36-211"/>
</dbReference>
<dbReference type="PDB" id="8VH5">
    <property type="method" value="EM"/>
    <property type="resolution" value="4.00 A"/>
    <property type="chains" value="B/D=36-211"/>
</dbReference>
<dbReference type="PDBsum" id="2IL1"/>
<dbReference type="PDBsum" id="8VH4"/>
<dbReference type="PDBsum" id="8VH5"/>
<dbReference type="EMDB" id="EMD-43234"/>
<dbReference type="EMDB" id="EMD-43235"/>
<dbReference type="SMR" id="Q6IQ22"/>
<dbReference type="BioGRID" id="128387">
    <property type="interactions" value="33"/>
</dbReference>
<dbReference type="FunCoup" id="Q6IQ22">
    <property type="interactions" value="794"/>
</dbReference>
<dbReference type="IntAct" id="Q6IQ22">
    <property type="interactions" value="15"/>
</dbReference>
<dbReference type="STRING" id="9606.ENSP00000331748"/>
<dbReference type="TCDB" id="8.A.248.1.1">
    <property type="family name" value="the ras-related rab gtpase (rrrg) family"/>
</dbReference>
<dbReference type="iPTMnet" id="Q6IQ22"/>
<dbReference type="PhosphoSitePlus" id="Q6IQ22"/>
<dbReference type="SwissPalm" id="Q6IQ22"/>
<dbReference type="BioMuta" id="RAB12"/>
<dbReference type="DMDM" id="122064944"/>
<dbReference type="jPOST" id="Q6IQ22"/>
<dbReference type="MassIVE" id="Q6IQ22"/>
<dbReference type="PaxDb" id="9606-ENSP00000331748"/>
<dbReference type="PeptideAtlas" id="Q6IQ22"/>
<dbReference type="ProteomicsDB" id="66478"/>
<dbReference type="Pumba" id="Q6IQ22"/>
<dbReference type="Antibodypedia" id="41715">
    <property type="antibodies" value="119 antibodies from 23 providers"/>
</dbReference>
<dbReference type="DNASU" id="201475"/>
<dbReference type="GeneID" id="201475"/>
<dbReference type="KEGG" id="hsa:201475"/>
<dbReference type="UCSC" id="uc002knp.4">
    <property type="organism name" value="human"/>
</dbReference>
<dbReference type="AGR" id="HGNC:31332"/>
<dbReference type="CTD" id="201475"/>
<dbReference type="DisGeNET" id="201475"/>
<dbReference type="GeneCards" id="RAB12"/>
<dbReference type="HGNC" id="HGNC:31332">
    <property type="gene designation" value="RAB12"/>
</dbReference>
<dbReference type="MIM" id="616448">
    <property type="type" value="gene"/>
</dbReference>
<dbReference type="neXtProt" id="NX_Q6IQ22"/>
<dbReference type="PharmGKB" id="PA142671102"/>
<dbReference type="VEuPathDB" id="HostDB:ENSG00000206418"/>
<dbReference type="eggNOG" id="KOG0078">
    <property type="taxonomic scope" value="Eukaryota"/>
</dbReference>
<dbReference type="eggNOG" id="KOG0395">
    <property type="taxonomic scope" value="Eukaryota"/>
</dbReference>
<dbReference type="HOGENOM" id="CLU_041217_2_1_1"/>
<dbReference type="InParanoid" id="Q6IQ22"/>
<dbReference type="OrthoDB" id="8821495at2759"/>
<dbReference type="PAN-GO" id="Q6IQ22">
    <property type="GO annotations" value="11 GO annotations based on evolutionary models"/>
</dbReference>
<dbReference type="PhylomeDB" id="Q6IQ22"/>
<dbReference type="TreeFam" id="TF314097"/>
<dbReference type="PathwayCommons" id="Q6IQ22"/>
<dbReference type="Reactome" id="R-HSA-8873719">
    <property type="pathway name" value="RAB geranylgeranylation"/>
</dbReference>
<dbReference type="Reactome" id="R-HSA-8876198">
    <property type="pathway name" value="RAB GEFs exchange GTP for GDP on RABs"/>
</dbReference>
<dbReference type="SignaLink" id="Q6IQ22"/>
<dbReference type="SIGNOR" id="Q6IQ22"/>
<dbReference type="BioGRID-ORCS" id="201475">
    <property type="hits" value="14 hits in 1152 CRISPR screens"/>
</dbReference>
<dbReference type="ChiTaRS" id="RAB12">
    <property type="organism name" value="human"/>
</dbReference>
<dbReference type="EvolutionaryTrace" id="Q6IQ22"/>
<dbReference type="GenomeRNAi" id="201475"/>
<dbReference type="Pharos" id="Q6IQ22">
    <property type="development level" value="Tbio"/>
</dbReference>
<dbReference type="PRO" id="PR:Q6IQ22"/>
<dbReference type="Proteomes" id="UP000005640">
    <property type="component" value="Chromosome 18"/>
</dbReference>
<dbReference type="RNAct" id="Q6IQ22">
    <property type="molecule type" value="protein"/>
</dbReference>
<dbReference type="GO" id="GO:0005776">
    <property type="term" value="C:autophagosome"/>
    <property type="evidence" value="ECO:0007669"/>
    <property type="project" value="UniProtKB-SubCell"/>
</dbReference>
<dbReference type="GO" id="GO:0005829">
    <property type="term" value="C:cytosol"/>
    <property type="evidence" value="ECO:0000304"/>
    <property type="project" value="Reactome"/>
</dbReference>
<dbReference type="GO" id="GO:0005768">
    <property type="term" value="C:endosome"/>
    <property type="evidence" value="ECO:0000318"/>
    <property type="project" value="GO_Central"/>
</dbReference>
<dbReference type="GO" id="GO:0000139">
    <property type="term" value="C:Golgi membrane"/>
    <property type="evidence" value="ECO:0007669"/>
    <property type="project" value="UniProtKB-SubCell"/>
</dbReference>
<dbReference type="GO" id="GO:0005765">
    <property type="term" value="C:lysosomal membrane"/>
    <property type="evidence" value="ECO:0007669"/>
    <property type="project" value="UniProtKB-SubCell"/>
</dbReference>
<dbReference type="GO" id="GO:0005764">
    <property type="term" value="C:lysosome"/>
    <property type="evidence" value="ECO:0000250"/>
    <property type="project" value="UniProtKB"/>
</dbReference>
<dbReference type="GO" id="GO:0005886">
    <property type="term" value="C:plasma membrane"/>
    <property type="evidence" value="ECO:0000318"/>
    <property type="project" value="GO_Central"/>
</dbReference>
<dbReference type="GO" id="GO:0055038">
    <property type="term" value="C:recycling endosome membrane"/>
    <property type="evidence" value="ECO:0000250"/>
    <property type="project" value="UniProtKB"/>
</dbReference>
<dbReference type="GO" id="GO:0008021">
    <property type="term" value="C:synaptic vesicle"/>
    <property type="evidence" value="ECO:0000318"/>
    <property type="project" value="GO_Central"/>
</dbReference>
<dbReference type="GO" id="GO:0030140">
    <property type="term" value="C:trans-Golgi network transport vesicle"/>
    <property type="evidence" value="ECO:0000318"/>
    <property type="project" value="GO_Central"/>
</dbReference>
<dbReference type="GO" id="GO:0019003">
    <property type="term" value="F:GDP binding"/>
    <property type="evidence" value="ECO:0000314"/>
    <property type="project" value="UniProtKB"/>
</dbReference>
<dbReference type="GO" id="GO:0005525">
    <property type="term" value="F:GTP binding"/>
    <property type="evidence" value="ECO:0007669"/>
    <property type="project" value="UniProtKB-KW"/>
</dbReference>
<dbReference type="GO" id="GO:0003924">
    <property type="term" value="F:GTPase activity"/>
    <property type="evidence" value="ECO:0000318"/>
    <property type="project" value="GO_Central"/>
</dbReference>
<dbReference type="GO" id="GO:0006914">
    <property type="term" value="P:autophagy"/>
    <property type="evidence" value="ECO:0007669"/>
    <property type="project" value="UniProtKB-KW"/>
</dbReference>
<dbReference type="GO" id="GO:0032456">
    <property type="term" value="P:endocytic recycling"/>
    <property type="evidence" value="ECO:0000318"/>
    <property type="project" value="GO_Central"/>
</dbReference>
<dbReference type="GO" id="GO:0008333">
    <property type="term" value="P:endosome to lysosome transport"/>
    <property type="evidence" value="ECO:0000250"/>
    <property type="project" value="UniProtKB"/>
</dbReference>
<dbReference type="GO" id="GO:0006887">
    <property type="term" value="P:exocytosis"/>
    <property type="evidence" value="ECO:0000318"/>
    <property type="project" value="GO_Central"/>
</dbReference>
<dbReference type="GO" id="GO:0030163">
    <property type="term" value="P:protein catabolic process"/>
    <property type="evidence" value="ECO:0000250"/>
    <property type="project" value="UniProtKB"/>
</dbReference>
<dbReference type="GO" id="GO:0015031">
    <property type="term" value="P:protein transport"/>
    <property type="evidence" value="ECO:0007669"/>
    <property type="project" value="UniProtKB-KW"/>
</dbReference>
<dbReference type="GO" id="GO:0032482">
    <property type="term" value="P:Rab protein signal transduction"/>
    <property type="evidence" value="ECO:0007669"/>
    <property type="project" value="InterPro"/>
</dbReference>
<dbReference type="CDD" id="cd04120">
    <property type="entry name" value="Rab12"/>
    <property type="match status" value="1"/>
</dbReference>
<dbReference type="FunFam" id="3.40.50.300:FF:000568">
    <property type="entry name" value="Putative Ras-related protein Rab-12"/>
    <property type="match status" value="1"/>
</dbReference>
<dbReference type="Gene3D" id="3.40.50.300">
    <property type="entry name" value="P-loop containing nucleotide triphosphate hydrolases"/>
    <property type="match status" value="1"/>
</dbReference>
<dbReference type="InterPro" id="IPR027417">
    <property type="entry name" value="P-loop_NTPase"/>
</dbReference>
<dbReference type="InterPro" id="IPR041830">
    <property type="entry name" value="Rab12"/>
</dbReference>
<dbReference type="InterPro" id="IPR005225">
    <property type="entry name" value="Small_GTP-bd"/>
</dbReference>
<dbReference type="InterPro" id="IPR001806">
    <property type="entry name" value="Small_GTPase"/>
</dbReference>
<dbReference type="InterPro" id="IPR050305">
    <property type="entry name" value="Small_GTPase_Rab"/>
</dbReference>
<dbReference type="NCBIfam" id="TIGR00231">
    <property type="entry name" value="small_GTP"/>
    <property type="match status" value="1"/>
</dbReference>
<dbReference type="PANTHER" id="PTHR47980">
    <property type="entry name" value="LD44762P"/>
    <property type="match status" value="1"/>
</dbReference>
<dbReference type="Pfam" id="PF00071">
    <property type="entry name" value="Ras"/>
    <property type="match status" value="1"/>
</dbReference>
<dbReference type="PRINTS" id="PR00449">
    <property type="entry name" value="RASTRNSFRMNG"/>
</dbReference>
<dbReference type="SMART" id="SM00175">
    <property type="entry name" value="RAB"/>
    <property type="match status" value="1"/>
</dbReference>
<dbReference type="SMART" id="SM00176">
    <property type="entry name" value="RAN"/>
    <property type="match status" value="1"/>
</dbReference>
<dbReference type="SMART" id="SM00173">
    <property type="entry name" value="RAS"/>
    <property type="match status" value="1"/>
</dbReference>
<dbReference type="SMART" id="SM00174">
    <property type="entry name" value="RHO"/>
    <property type="match status" value="1"/>
</dbReference>
<dbReference type="SUPFAM" id="SSF52540">
    <property type="entry name" value="P-loop containing nucleoside triphosphate hydrolases"/>
    <property type="match status" value="1"/>
</dbReference>
<dbReference type="PROSITE" id="PS51419">
    <property type="entry name" value="RAB"/>
    <property type="match status" value="1"/>
</dbReference>
<evidence type="ECO:0000250" key="1"/>
<evidence type="ECO:0000250" key="2">
    <source>
        <dbReference type="UniProtKB" id="P35283"/>
    </source>
</evidence>
<evidence type="ECO:0000250" key="3">
    <source>
        <dbReference type="UniProtKB" id="P51152"/>
    </source>
</evidence>
<evidence type="ECO:0000250" key="4">
    <source>
        <dbReference type="UniProtKB" id="P61026"/>
    </source>
</evidence>
<evidence type="ECO:0000250" key="5">
    <source>
        <dbReference type="UniProtKB" id="P62820"/>
    </source>
</evidence>
<evidence type="ECO:0000256" key="6">
    <source>
        <dbReference type="SAM" id="MobiDB-lite"/>
    </source>
</evidence>
<evidence type="ECO:0000269" key="7">
    <source>
    </source>
</evidence>
<evidence type="ECO:0000269" key="8">
    <source>
    </source>
</evidence>
<evidence type="ECO:0000269" key="9">
    <source>
    </source>
</evidence>
<evidence type="ECO:0000269" key="10">
    <source>
    </source>
</evidence>
<evidence type="ECO:0000269" key="11">
    <source ref="14"/>
</evidence>
<evidence type="ECO:0000305" key="12"/>
<evidence type="ECO:0000312" key="13">
    <source>
        <dbReference type="HGNC" id="HGNC:31332"/>
    </source>
</evidence>
<evidence type="ECO:0007744" key="14">
    <source>
        <dbReference type="PDB" id="2IL1"/>
    </source>
</evidence>
<evidence type="ECO:0007744" key="15">
    <source>
    </source>
</evidence>
<evidence type="ECO:0007744" key="16">
    <source>
    </source>
</evidence>
<evidence type="ECO:0007744" key="17">
    <source>
    </source>
</evidence>
<evidence type="ECO:0007829" key="18">
    <source>
        <dbReference type="PDB" id="2IL1"/>
    </source>
</evidence>
<reference key="1">
    <citation type="journal article" date="2005" name="Nature">
        <title>DNA sequence and analysis of human chromosome 18.</title>
        <authorList>
            <person name="Nusbaum C."/>
            <person name="Zody M.C."/>
            <person name="Borowsky M.L."/>
            <person name="Kamal M."/>
            <person name="Kodira C.D."/>
            <person name="Taylor T.D."/>
            <person name="Whittaker C.A."/>
            <person name="Chang J.L."/>
            <person name="Cuomo C.A."/>
            <person name="Dewar K."/>
            <person name="FitzGerald M.G."/>
            <person name="Yang X."/>
            <person name="Abouelleil A."/>
            <person name="Allen N.R."/>
            <person name="Anderson S."/>
            <person name="Bloom T."/>
            <person name="Bugalter B."/>
            <person name="Butler J."/>
            <person name="Cook A."/>
            <person name="DeCaprio D."/>
            <person name="Engels R."/>
            <person name="Garber M."/>
            <person name="Gnirke A."/>
            <person name="Hafez N."/>
            <person name="Hall J.L."/>
            <person name="Norman C.H."/>
            <person name="Itoh T."/>
            <person name="Jaffe D.B."/>
            <person name="Kuroki Y."/>
            <person name="Lehoczky J."/>
            <person name="Lui A."/>
            <person name="Macdonald P."/>
            <person name="Mauceli E."/>
            <person name="Mikkelsen T.S."/>
            <person name="Naylor J.W."/>
            <person name="Nicol R."/>
            <person name="Nguyen C."/>
            <person name="Noguchi H."/>
            <person name="O'Leary S.B."/>
            <person name="Piqani B."/>
            <person name="Smith C.L."/>
            <person name="Talamas J.A."/>
            <person name="Topham K."/>
            <person name="Totoki Y."/>
            <person name="Toyoda A."/>
            <person name="Wain H.M."/>
            <person name="Young S.K."/>
            <person name="Zeng Q."/>
            <person name="Zimmer A.R."/>
            <person name="Fujiyama A."/>
            <person name="Hattori M."/>
            <person name="Birren B.W."/>
            <person name="Sakaki Y."/>
            <person name="Lander E.S."/>
        </authorList>
    </citation>
    <scope>NUCLEOTIDE SEQUENCE [LARGE SCALE GENOMIC DNA]</scope>
</reference>
<reference key="2">
    <citation type="submission" date="2005-09" db="EMBL/GenBank/DDBJ databases">
        <authorList>
            <person name="Mural R.J."/>
            <person name="Istrail S."/>
            <person name="Sutton G.G."/>
            <person name="Florea L."/>
            <person name="Halpern A.L."/>
            <person name="Mobarry C.M."/>
            <person name="Lippert R."/>
            <person name="Walenz B."/>
            <person name="Shatkay H."/>
            <person name="Dew I."/>
            <person name="Miller J.R."/>
            <person name="Flanigan M.J."/>
            <person name="Edwards N.J."/>
            <person name="Bolanos R."/>
            <person name="Fasulo D."/>
            <person name="Halldorsson B.V."/>
            <person name="Hannenhalli S."/>
            <person name="Turner R."/>
            <person name="Yooseph S."/>
            <person name="Lu F."/>
            <person name="Nusskern D.R."/>
            <person name="Shue B.C."/>
            <person name="Zheng X.H."/>
            <person name="Zhong F."/>
            <person name="Delcher A.L."/>
            <person name="Huson D.H."/>
            <person name="Kravitz S.A."/>
            <person name="Mouchard L."/>
            <person name="Reinert K."/>
            <person name="Remington K.A."/>
            <person name="Clark A.G."/>
            <person name="Waterman M.S."/>
            <person name="Eichler E.E."/>
            <person name="Adams M.D."/>
            <person name="Hunkapiller M.W."/>
            <person name="Myers E.W."/>
            <person name="Venter J.C."/>
        </authorList>
    </citation>
    <scope>NUCLEOTIDE SEQUENCE [LARGE SCALE GENOMIC DNA]</scope>
</reference>
<reference key="3">
    <citation type="journal article" date="2004" name="Genome Res.">
        <title>The status, quality, and expansion of the NIH full-length cDNA project: the Mammalian Gene Collection (MGC).</title>
        <authorList>
            <consortium name="The MGC Project Team"/>
        </authorList>
    </citation>
    <scope>NUCLEOTIDE SEQUENCE [LARGE SCALE MRNA]</scope>
    <source>
        <tissue>Placenta</tissue>
    </source>
</reference>
<reference key="4">
    <citation type="journal article" date="2008" name="Proc. Natl. Acad. Sci. U.S.A.">
        <title>A quantitative atlas of mitotic phosphorylation.</title>
        <authorList>
            <person name="Dephoure N."/>
            <person name="Zhou C."/>
            <person name="Villen J."/>
            <person name="Beausoleil S.A."/>
            <person name="Bakalarski C.E."/>
            <person name="Elledge S.J."/>
            <person name="Gygi S.P."/>
        </authorList>
    </citation>
    <scope>IDENTIFICATION BY MASS SPECTROMETRY [LARGE SCALE ANALYSIS]</scope>
    <source>
        <tissue>Cervix carcinoma</tissue>
    </source>
</reference>
<reference key="5">
    <citation type="journal article" date="2009" name="Anal. Chem.">
        <title>Lys-N and trypsin cover complementary parts of the phosphoproteome in a refined SCX-based approach.</title>
        <authorList>
            <person name="Gauci S."/>
            <person name="Helbig A.O."/>
            <person name="Slijper M."/>
            <person name="Krijgsveld J."/>
            <person name="Heck A.J."/>
            <person name="Mohammed S."/>
        </authorList>
    </citation>
    <scope>IDENTIFICATION BY MASS SPECTROMETRY [LARGE SCALE ANALYSIS]</scope>
</reference>
<reference key="6">
    <citation type="journal article" date="2010" name="J. Cell Biol.">
        <title>Family-wide characterization of the DENN domain Rab GDP-GTP exchange factors.</title>
        <authorList>
            <person name="Yoshimura S."/>
            <person name="Gerondopoulos A."/>
            <person name="Linford A."/>
            <person name="Rigden D.J."/>
            <person name="Barr F.A."/>
        </authorList>
    </citation>
    <scope>ACTIVITY REGULATION</scope>
</reference>
<reference key="7">
    <citation type="journal article" date="2011" name="BMC Syst. Biol.">
        <title>Initial characterization of the human central proteome.</title>
        <authorList>
            <person name="Burkard T.R."/>
            <person name="Planyavsky M."/>
            <person name="Kaupe I."/>
            <person name="Breitwieser F.P."/>
            <person name="Buerckstuemmer T."/>
            <person name="Bennett K.L."/>
            <person name="Superti-Furga G."/>
            <person name="Colinge J."/>
        </authorList>
    </citation>
    <scope>IDENTIFICATION BY MASS SPECTROMETRY [LARGE SCALE ANALYSIS]</scope>
</reference>
<reference key="8">
    <citation type="journal article" date="2011" name="Biol. Chem.">
        <title>Identification and characterisation of novel Mss4-binding Rab GTPases.</title>
        <authorList>
            <person name="Wixler V."/>
            <person name="Wixler L."/>
            <person name="Altenfeld A."/>
            <person name="Ludwig S."/>
            <person name="Goody R.S."/>
            <person name="Itzen A."/>
        </authorList>
    </citation>
    <scope>INTERACTION WITH RABIF</scope>
</reference>
<reference key="9">
    <citation type="journal article" date="2012" name="Mol. Cell. Proteomics">
        <title>Comparative large-scale characterisation of plant vs. mammal proteins reveals similar and idiosyncratic N-alpha acetylation features.</title>
        <authorList>
            <person name="Bienvenut W.V."/>
            <person name="Sumpton D."/>
            <person name="Martinez A."/>
            <person name="Lilla S."/>
            <person name="Espagne C."/>
            <person name="Meinnel T."/>
            <person name="Giglione C."/>
        </authorList>
    </citation>
    <scope>ACETYLATION [LARGE SCALE ANALYSIS] AT MET-1</scope>
    <scope>IDENTIFICATION BY MASS SPECTROMETRY [LARGE SCALE ANALYSIS]</scope>
</reference>
<reference key="10">
    <citation type="journal article" date="2012" name="Proc. Natl. Acad. Sci. U.S.A.">
        <title>N-terminal acetylome analyses and functional insights of the N-terminal acetyltransferase NatB.</title>
        <authorList>
            <person name="Van Damme P."/>
            <person name="Lasa M."/>
            <person name="Polevoda B."/>
            <person name="Gazquez C."/>
            <person name="Elosegui-Artola A."/>
            <person name="Kim D.S."/>
            <person name="De Juan-Pardo E."/>
            <person name="Demeyer K."/>
            <person name="Hole K."/>
            <person name="Larrea E."/>
            <person name="Timmerman E."/>
            <person name="Prieto J."/>
            <person name="Arnesen T."/>
            <person name="Sherman F."/>
            <person name="Gevaert K."/>
            <person name="Aldabe R."/>
        </authorList>
    </citation>
    <scope>ACETYLATION [LARGE SCALE ANALYSIS] AT MET-1</scope>
    <scope>IDENTIFICATION BY MASS SPECTROMETRY [LARGE SCALE ANALYSIS]</scope>
</reference>
<reference key="11">
    <citation type="journal article" date="2013" name="J. Proteome Res.">
        <title>Toward a comprehensive characterization of a human cancer cell phosphoproteome.</title>
        <authorList>
            <person name="Zhou H."/>
            <person name="Di Palma S."/>
            <person name="Preisinger C."/>
            <person name="Peng M."/>
            <person name="Polat A.N."/>
            <person name="Heck A.J."/>
            <person name="Mohammed S."/>
        </authorList>
    </citation>
    <scope>PHOSPHORYLATION [LARGE SCALE ANALYSIS] AT SER-21 AND SER-106</scope>
    <scope>IDENTIFICATION BY MASS SPECTROMETRY [LARGE SCALE ANALYSIS]</scope>
    <source>
        <tissue>Cervix carcinoma</tissue>
        <tissue>Erythroleukemia</tissue>
    </source>
</reference>
<reference key="12">
    <citation type="journal article" date="2016" name="Elife">
        <title>Phosphoproteomics reveals that Parkinson's disease kinase LRRK2 regulates a subset of Rab GTPases.</title>
        <authorList>
            <person name="Steger M."/>
            <person name="Tonelli F."/>
            <person name="Ito G."/>
            <person name="Davies P."/>
            <person name="Trost M."/>
            <person name="Vetter M."/>
            <person name="Wachter S."/>
            <person name="Lorentzen E."/>
            <person name="Duddy G."/>
            <person name="Wilson S."/>
            <person name="Baptista M.A."/>
            <person name="Fiske B.K."/>
            <person name="Fell M.J."/>
            <person name="Morrow J.A."/>
            <person name="Reith A.D."/>
            <person name="Alessi D.R."/>
            <person name="Mann M."/>
        </authorList>
    </citation>
    <scope>INTERACTION WITH LRRK2; GDI1 AND GDI2</scope>
    <scope>PHOSPHORYLATION AT SER-106</scope>
    <scope>MUTAGENESIS OF SER-106</scope>
</reference>
<reference key="13">
    <citation type="journal article" date="2017" name="Elife">
        <title>Systematic proteomic analysis of LRRK2-mediated Rab GTPase phosphorylation establishes a connection to ciliogenesis.</title>
        <authorList>
            <person name="Steger M."/>
            <person name="Diez F."/>
            <person name="Dhekne H.S."/>
            <person name="Lis P."/>
            <person name="Nirujogi R.S."/>
            <person name="Karayel O."/>
            <person name="Tonelli F."/>
            <person name="Martinez T.N."/>
            <person name="Lorentzen E."/>
            <person name="Pfeffer S.R."/>
            <person name="Alessi D.R."/>
            <person name="Mann M."/>
        </authorList>
    </citation>
    <scope>INTERACTION WITH GDI1; GDI2; CHM; CHML; RILPL1 AND RILPL2</scope>
    <scope>PHOSPHORYLATION AT SER-106</scope>
    <scope>MUTAGENESIS OF SER-106</scope>
</reference>
<reference evidence="14" key="14">
    <citation type="submission" date="2009-02" db="PDB data bank">
        <title>Crystal structure of a predicted human GTPase in complex with GDP.</title>
        <authorList>
            <consortium name="Structural genomics consortium (SGC)"/>
        </authorList>
    </citation>
    <scope>X-RAY CRYSTALLOGRAPHY (2.1 ANGSTROMS) OF 36-208 IN COMPLEX WITH MAGNESIUM AND GDP</scope>
    <scope>COFACTOR</scope>
</reference>